<sequence length="360" mass="41419">MPTILVSALEASSNVHLEELRRNLPKDYRFIGVFEGKEALYSPREFSIMGFRDVIGRLGFLLKAHKEMVQLAKQADMVLLMDSSSFNIPLAKKIKKQDPHKKIMYYILPQVWAWKKWRAKSLEKYCDFLGAILPFEVGYYQKKAQYVGHPLLDEIKYYKKDIKGETLVFMPGSRKSEIAKIFPLFVKVAQILEQNEGFKRRVLVVPSFFKGLDLKALYGEDIKLFEISYDAHKSLFEAEFAFICSGTATLEAALIGTPFVLAYRAKTMDFLIARMFVNLHYIGLANIFYNALNNETPGLGESQLHPELIQHFLSVEGLLKAYEEMDRERYFKESLRLREYLASGSARKIANGMAFLLNLT</sequence>
<accession>B2USW3</accession>
<feature type="chain" id="PRO_1000123053" description="Lipid-A-disaccharide synthase">
    <location>
        <begin position="1"/>
        <end position="360"/>
    </location>
</feature>
<protein>
    <recommendedName>
        <fullName evidence="1">Lipid-A-disaccharide synthase</fullName>
        <ecNumber evidence="1">2.4.1.182</ecNumber>
    </recommendedName>
</protein>
<comment type="function">
    <text evidence="1">Condensation of UDP-2,3-diacylglucosamine and 2,3-diacylglucosamine-1-phosphate to form lipid A disaccharide, a precursor of lipid A, a phosphorylated glycolipid that anchors the lipopolysaccharide to the outer membrane of the cell.</text>
</comment>
<comment type="catalytic activity">
    <reaction evidence="1">
        <text>a lipid X + a UDP-2-N,3-O-bis[(3R)-3-hydroxyacyl]-alpha-D-glucosamine = a lipid A disaccharide + UDP + H(+)</text>
        <dbReference type="Rhea" id="RHEA:67828"/>
        <dbReference type="ChEBI" id="CHEBI:15378"/>
        <dbReference type="ChEBI" id="CHEBI:58223"/>
        <dbReference type="ChEBI" id="CHEBI:137748"/>
        <dbReference type="ChEBI" id="CHEBI:176338"/>
        <dbReference type="ChEBI" id="CHEBI:176343"/>
        <dbReference type="EC" id="2.4.1.182"/>
    </reaction>
</comment>
<comment type="pathway">
    <text evidence="1">Bacterial outer membrane biogenesis; LPS lipid A biosynthesis.</text>
</comment>
<comment type="similarity">
    <text evidence="1">Belongs to the LpxB family.</text>
</comment>
<keyword id="KW-0328">Glycosyltransferase</keyword>
<keyword id="KW-0441">Lipid A biosynthesis</keyword>
<keyword id="KW-0444">Lipid biosynthesis</keyword>
<keyword id="KW-0443">Lipid metabolism</keyword>
<keyword id="KW-0808">Transferase</keyword>
<organism>
    <name type="scientific">Helicobacter pylori (strain Shi470)</name>
    <dbReference type="NCBI Taxonomy" id="512562"/>
    <lineage>
        <taxon>Bacteria</taxon>
        <taxon>Pseudomonadati</taxon>
        <taxon>Campylobacterota</taxon>
        <taxon>Epsilonproteobacteria</taxon>
        <taxon>Campylobacterales</taxon>
        <taxon>Helicobacteraceae</taxon>
        <taxon>Helicobacter</taxon>
    </lineage>
</organism>
<dbReference type="EC" id="2.4.1.182" evidence="1"/>
<dbReference type="EMBL" id="CP001072">
    <property type="protein sequence ID" value="ACD47945.1"/>
    <property type="molecule type" value="Genomic_DNA"/>
</dbReference>
<dbReference type="RefSeq" id="WP_001142281.1">
    <property type="nucleotide sequence ID" value="NC_010698.2"/>
</dbReference>
<dbReference type="SMR" id="B2USW3"/>
<dbReference type="CAZy" id="GT19">
    <property type="family name" value="Glycosyltransferase Family 19"/>
</dbReference>
<dbReference type="KEGG" id="hps:HPSH_02475"/>
<dbReference type="HOGENOM" id="CLU_036577_3_1_7"/>
<dbReference type="UniPathway" id="UPA00973"/>
<dbReference type="GO" id="GO:0016020">
    <property type="term" value="C:membrane"/>
    <property type="evidence" value="ECO:0007669"/>
    <property type="project" value="GOC"/>
</dbReference>
<dbReference type="GO" id="GO:0008915">
    <property type="term" value="F:lipid-A-disaccharide synthase activity"/>
    <property type="evidence" value="ECO:0007669"/>
    <property type="project" value="UniProtKB-UniRule"/>
</dbReference>
<dbReference type="GO" id="GO:0005543">
    <property type="term" value="F:phospholipid binding"/>
    <property type="evidence" value="ECO:0007669"/>
    <property type="project" value="TreeGrafter"/>
</dbReference>
<dbReference type="GO" id="GO:0009245">
    <property type="term" value="P:lipid A biosynthetic process"/>
    <property type="evidence" value="ECO:0007669"/>
    <property type="project" value="UniProtKB-UniRule"/>
</dbReference>
<dbReference type="HAMAP" id="MF_00392">
    <property type="entry name" value="LpxB"/>
    <property type="match status" value="1"/>
</dbReference>
<dbReference type="InterPro" id="IPR003835">
    <property type="entry name" value="Glyco_trans_19"/>
</dbReference>
<dbReference type="NCBIfam" id="TIGR00215">
    <property type="entry name" value="lpxB"/>
    <property type="match status" value="1"/>
</dbReference>
<dbReference type="PANTHER" id="PTHR30372">
    <property type="entry name" value="LIPID-A-DISACCHARIDE SYNTHASE"/>
    <property type="match status" value="1"/>
</dbReference>
<dbReference type="PANTHER" id="PTHR30372:SF4">
    <property type="entry name" value="LIPID-A-DISACCHARIDE SYNTHASE, MITOCHONDRIAL-RELATED"/>
    <property type="match status" value="1"/>
</dbReference>
<dbReference type="Pfam" id="PF02684">
    <property type="entry name" value="LpxB"/>
    <property type="match status" value="1"/>
</dbReference>
<dbReference type="SUPFAM" id="SSF53756">
    <property type="entry name" value="UDP-Glycosyltransferase/glycogen phosphorylase"/>
    <property type="match status" value="1"/>
</dbReference>
<evidence type="ECO:0000255" key="1">
    <source>
        <dbReference type="HAMAP-Rule" id="MF_00392"/>
    </source>
</evidence>
<proteinExistence type="inferred from homology"/>
<reference key="1">
    <citation type="submission" date="2008-05" db="EMBL/GenBank/DDBJ databases">
        <title>Genome sequence of Helicobacter pylori from the remote Amazon: traces of Asian ancestry of the first Americans.</title>
        <authorList>
            <person name="Kersulyte D."/>
            <person name="Kalia A."/>
            <person name="Gilman R.H."/>
            <person name="Berg D.E."/>
        </authorList>
    </citation>
    <scope>NUCLEOTIDE SEQUENCE [LARGE SCALE GENOMIC DNA]</scope>
    <source>
        <strain>Shi470</strain>
    </source>
</reference>
<gene>
    <name evidence="1" type="primary">lpxB</name>
    <name type="ordered locus">HPSH_02475</name>
</gene>
<name>LPXB_HELPS</name>